<reference key="1">
    <citation type="submission" date="2006-06" db="EMBL/GenBank/DDBJ databases">
        <title>Complete sequence of chromosome of Mesorhizobium sp. BNC1.</title>
        <authorList>
            <consortium name="US DOE Joint Genome Institute"/>
            <person name="Copeland A."/>
            <person name="Lucas S."/>
            <person name="Lapidus A."/>
            <person name="Barry K."/>
            <person name="Detter J.C."/>
            <person name="Glavina del Rio T."/>
            <person name="Hammon N."/>
            <person name="Israni S."/>
            <person name="Dalin E."/>
            <person name="Tice H."/>
            <person name="Pitluck S."/>
            <person name="Chertkov O."/>
            <person name="Brettin T."/>
            <person name="Bruce D."/>
            <person name="Han C."/>
            <person name="Tapia R."/>
            <person name="Gilna P."/>
            <person name="Schmutz J."/>
            <person name="Larimer F."/>
            <person name="Land M."/>
            <person name="Hauser L."/>
            <person name="Kyrpides N."/>
            <person name="Mikhailova N."/>
            <person name="Richardson P."/>
        </authorList>
    </citation>
    <scope>NUCLEOTIDE SEQUENCE [LARGE SCALE GENOMIC DNA]</scope>
    <source>
        <strain>BNC1</strain>
    </source>
</reference>
<protein>
    <recommendedName>
        <fullName evidence="1">Pyridoxine 5'-phosphate synthase</fullName>
        <shortName evidence="1">PNP synthase</shortName>
        <ecNumber evidence="1">2.6.99.2</ecNumber>
    </recommendedName>
</protein>
<accession>Q11I86</accession>
<gene>
    <name evidence="1" type="primary">pdxJ</name>
    <name type="ordered locus">Meso_1493</name>
</gene>
<name>PDXJ_CHESB</name>
<evidence type="ECO:0000255" key="1">
    <source>
        <dbReference type="HAMAP-Rule" id="MF_00279"/>
    </source>
</evidence>
<feature type="chain" id="PRO_1000022379" description="Pyridoxine 5'-phosphate synthase">
    <location>
        <begin position="1"/>
        <end position="248"/>
    </location>
</feature>
<feature type="active site" description="Proton acceptor" evidence="1">
    <location>
        <position position="44"/>
    </location>
</feature>
<feature type="active site" description="Proton acceptor" evidence="1">
    <location>
        <position position="76"/>
    </location>
</feature>
<feature type="active site" description="Proton donor" evidence="1">
    <location>
        <position position="200"/>
    </location>
</feature>
<feature type="binding site" evidence="1">
    <location>
        <position position="8"/>
    </location>
    <ligand>
        <name>3-amino-2-oxopropyl phosphate</name>
        <dbReference type="ChEBI" id="CHEBI:57279"/>
    </ligand>
</feature>
<feature type="binding site" evidence="1">
    <location>
        <position position="19"/>
    </location>
    <ligand>
        <name>3-amino-2-oxopropyl phosphate</name>
        <dbReference type="ChEBI" id="CHEBI:57279"/>
    </ligand>
</feature>
<feature type="binding site" evidence="1">
    <location>
        <position position="46"/>
    </location>
    <ligand>
        <name>1-deoxy-D-xylulose 5-phosphate</name>
        <dbReference type="ChEBI" id="CHEBI:57792"/>
    </ligand>
</feature>
<feature type="binding site" evidence="1">
    <location>
        <position position="51"/>
    </location>
    <ligand>
        <name>1-deoxy-D-xylulose 5-phosphate</name>
        <dbReference type="ChEBI" id="CHEBI:57792"/>
    </ligand>
</feature>
<feature type="binding site" evidence="1">
    <location>
        <position position="106"/>
    </location>
    <ligand>
        <name>1-deoxy-D-xylulose 5-phosphate</name>
        <dbReference type="ChEBI" id="CHEBI:57792"/>
    </ligand>
</feature>
<feature type="binding site" evidence="1">
    <location>
        <position position="201"/>
    </location>
    <ligand>
        <name>3-amino-2-oxopropyl phosphate</name>
        <dbReference type="ChEBI" id="CHEBI:57279"/>
    </ligand>
</feature>
<feature type="binding site" evidence="1">
    <location>
        <begin position="223"/>
        <end position="224"/>
    </location>
    <ligand>
        <name>3-amino-2-oxopropyl phosphate</name>
        <dbReference type="ChEBI" id="CHEBI:57279"/>
    </ligand>
</feature>
<feature type="site" description="Transition state stabilizer" evidence="1">
    <location>
        <position position="159"/>
    </location>
</feature>
<keyword id="KW-0963">Cytoplasm</keyword>
<keyword id="KW-0664">Pyridoxine biosynthesis</keyword>
<keyword id="KW-0808">Transferase</keyword>
<sequence>MPVKLSVNLNAVAMLRNRRDLPWPSVTALGRIALGAGAHGLTVHPRPDQRHIRFSDLPHIRALIDDEFPDREFNIEGYPSEDFLRLVEETQPEQVTLVPDDPSQATSDHGWQFQEHERFLAAAVGRLKRRGFRVSLFADPDADEAALAVAKAVGADRVELYTGPYGACYDDAEKAAKELRKLEKTAKTAQGLGLAVNAGHDLTVANLPALVEHVPSLAEVSIGHALTADALEYGMAETVRRYLSACEA</sequence>
<organism>
    <name type="scientific">Chelativorans sp. (strain BNC1)</name>
    <dbReference type="NCBI Taxonomy" id="266779"/>
    <lineage>
        <taxon>Bacteria</taxon>
        <taxon>Pseudomonadati</taxon>
        <taxon>Pseudomonadota</taxon>
        <taxon>Alphaproteobacteria</taxon>
        <taxon>Hyphomicrobiales</taxon>
        <taxon>Phyllobacteriaceae</taxon>
        <taxon>Chelativorans</taxon>
    </lineage>
</organism>
<comment type="function">
    <text evidence="1">Catalyzes the complicated ring closure reaction between the two acyclic compounds 1-deoxy-D-xylulose-5-phosphate (DXP) and 3-amino-2-oxopropyl phosphate (1-amino-acetone-3-phosphate or AAP) to form pyridoxine 5'-phosphate (PNP) and inorganic phosphate.</text>
</comment>
<comment type="catalytic activity">
    <reaction evidence="1">
        <text>3-amino-2-oxopropyl phosphate + 1-deoxy-D-xylulose 5-phosphate = pyridoxine 5'-phosphate + phosphate + 2 H2O + H(+)</text>
        <dbReference type="Rhea" id="RHEA:15265"/>
        <dbReference type="ChEBI" id="CHEBI:15377"/>
        <dbReference type="ChEBI" id="CHEBI:15378"/>
        <dbReference type="ChEBI" id="CHEBI:43474"/>
        <dbReference type="ChEBI" id="CHEBI:57279"/>
        <dbReference type="ChEBI" id="CHEBI:57792"/>
        <dbReference type="ChEBI" id="CHEBI:58589"/>
        <dbReference type="EC" id="2.6.99.2"/>
    </reaction>
</comment>
<comment type="pathway">
    <text evidence="1">Cofactor biosynthesis; pyridoxine 5'-phosphate biosynthesis; pyridoxine 5'-phosphate from D-erythrose 4-phosphate: step 5/5.</text>
</comment>
<comment type="subunit">
    <text evidence="1">Homooctamer; tetramer of dimers.</text>
</comment>
<comment type="subcellular location">
    <subcellularLocation>
        <location evidence="1">Cytoplasm</location>
    </subcellularLocation>
</comment>
<comment type="similarity">
    <text evidence="1">Belongs to the PNP synthase family.</text>
</comment>
<proteinExistence type="inferred from homology"/>
<dbReference type="EC" id="2.6.99.2" evidence="1"/>
<dbReference type="EMBL" id="CP000390">
    <property type="protein sequence ID" value="ABG62889.1"/>
    <property type="molecule type" value="Genomic_DNA"/>
</dbReference>
<dbReference type="SMR" id="Q11I86"/>
<dbReference type="STRING" id="266779.Meso_1493"/>
<dbReference type="KEGG" id="mes:Meso_1493"/>
<dbReference type="eggNOG" id="COG0854">
    <property type="taxonomic scope" value="Bacteria"/>
</dbReference>
<dbReference type="HOGENOM" id="CLU_074563_1_0_5"/>
<dbReference type="OrthoDB" id="9806590at2"/>
<dbReference type="UniPathway" id="UPA00244">
    <property type="reaction ID" value="UER00313"/>
</dbReference>
<dbReference type="GO" id="GO:0005829">
    <property type="term" value="C:cytosol"/>
    <property type="evidence" value="ECO:0007669"/>
    <property type="project" value="TreeGrafter"/>
</dbReference>
<dbReference type="GO" id="GO:0033856">
    <property type="term" value="F:pyridoxine 5'-phosphate synthase activity"/>
    <property type="evidence" value="ECO:0007669"/>
    <property type="project" value="UniProtKB-EC"/>
</dbReference>
<dbReference type="GO" id="GO:0008615">
    <property type="term" value="P:pyridoxine biosynthetic process"/>
    <property type="evidence" value="ECO:0007669"/>
    <property type="project" value="UniProtKB-UniRule"/>
</dbReference>
<dbReference type="CDD" id="cd00003">
    <property type="entry name" value="PNPsynthase"/>
    <property type="match status" value="1"/>
</dbReference>
<dbReference type="Gene3D" id="3.20.20.70">
    <property type="entry name" value="Aldolase class I"/>
    <property type="match status" value="1"/>
</dbReference>
<dbReference type="HAMAP" id="MF_00279">
    <property type="entry name" value="PdxJ"/>
    <property type="match status" value="1"/>
</dbReference>
<dbReference type="InterPro" id="IPR013785">
    <property type="entry name" value="Aldolase_TIM"/>
</dbReference>
<dbReference type="InterPro" id="IPR004569">
    <property type="entry name" value="PyrdxlP_synth_PdxJ"/>
</dbReference>
<dbReference type="InterPro" id="IPR036130">
    <property type="entry name" value="Pyridoxine-5'_phos_synth"/>
</dbReference>
<dbReference type="NCBIfam" id="TIGR00559">
    <property type="entry name" value="pdxJ"/>
    <property type="match status" value="1"/>
</dbReference>
<dbReference type="NCBIfam" id="NF003626">
    <property type="entry name" value="PRK05265.1-4"/>
    <property type="match status" value="1"/>
</dbReference>
<dbReference type="PANTHER" id="PTHR30456">
    <property type="entry name" value="PYRIDOXINE 5'-PHOSPHATE SYNTHASE"/>
    <property type="match status" value="1"/>
</dbReference>
<dbReference type="PANTHER" id="PTHR30456:SF0">
    <property type="entry name" value="PYRIDOXINE 5'-PHOSPHATE SYNTHASE"/>
    <property type="match status" value="1"/>
</dbReference>
<dbReference type="Pfam" id="PF03740">
    <property type="entry name" value="PdxJ"/>
    <property type="match status" value="1"/>
</dbReference>
<dbReference type="SUPFAM" id="SSF63892">
    <property type="entry name" value="Pyridoxine 5'-phosphate synthase"/>
    <property type="match status" value="1"/>
</dbReference>